<accession>P27280</accession>
<feature type="chain" id="PRO_0000222679" description="Non-structural protein NS2">
    <location>
        <begin position="1"/>
        <end position="376"/>
    </location>
</feature>
<feature type="region of interest" description="Disordered" evidence="1">
    <location>
        <begin position="163"/>
        <end position="201"/>
    </location>
</feature>
<feature type="compositionally biased region" description="Basic and acidic residues" evidence="1">
    <location>
        <begin position="163"/>
        <end position="188"/>
    </location>
</feature>
<comment type="function">
    <text>Single-stranded RNA-binding protein.</text>
</comment>
<comment type="similarity">
    <text evidence="2">Belongs to the orbivirus non-structural protein NS2 family.</text>
</comment>
<keyword id="KW-0694">RNA-binding</keyword>
<organismHost>
    <name type="scientific">Antilocapra americana</name>
    <name type="common">Pronghorn</name>
    <dbReference type="NCBI Taxonomy" id="9891"/>
</organismHost>
<organismHost>
    <name type="scientific">Odocoileus hemionus</name>
    <name type="common">Mule deer</name>
    <name type="synonym">Cervus hemionus</name>
    <dbReference type="NCBI Taxonomy" id="9872"/>
</organismHost>
<organismHost>
    <name type="scientific">Odocoileus virginianus</name>
    <name type="common">White-tailed deer</name>
    <dbReference type="NCBI Taxonomy" id="9874"/>
</organismHost>
<evidence type="ECO:0000256" key="1">
    <source>
        <dbReference type="SAM" id="MobiDB-lite"/>
    </source>
</evidence>
<evidence type="ECO:0000305" key="2"/>
<sequence>MEQKQRRFTKNVFVLDQKRKTICGQIAARQSLPYCQIKIGRNFALRAVATPEPKGYVLEICDVGAYRIQDGNDVISLMISADGVEGTQERWEEWKFESDLMRTNGHSSKYKRSVGRREIKVSKGMGIVPPYTRNDFDRRELPELPGVQRSKYDIRELRQKIREEREKGAVEQPHKPAFKTERGMNRPDSDEDQNPAGGVVNDWTCETQKRDQEAERREALEIRLADNDRESKHSNWIVRGRGKILKEVKNSFRTQEVERKKSDMGEVIIEEDDEDSEEEEGARASYITSAYIERISRIRKIKDERLSMLASMMPQQSGEYTTTLFIKKQKWDNVPLYLIDEMQKKYELQSVGSCERVAFVSKGTNLIILPVASNPR</sequence>
<dbReference type="EMBL" id="M69091">
    <property type="protein sequence ID" value="AAA43001.1"/>
    <property type="molecule type" value="Genomic_RNA"/>
</dbReference>
<dbReference type="PIR" id="B40788">
    <property type="entry name" value="MNXREH"/>
</dbReference>
<dbReference type="SMR" id="P27280"/>
<dbReference type="GO" id="GO:0003723">
    <property type="term" value="F:RNA binding"/>
    <property type="evidence" value="ECO:0007669"/>
    <property type="project" value="UniProtKB-KW"/>
</dbReference>
<dbReference type="InterPro" id="IPR007602">
    <property type="entry name" value="BTV_NS2"/>
</dbReference>
<dbReference type="InterPro" id="IPR037194">
    <property type="entry name" value="NS2_N"/>
</dbReference>
<dbReference type="Pfam" id="PF04514">
    <property type="entry name" value="BTV_NS2"/>
    <property type="match status" value="1"/>
</dbReference>
<dbReference type="SUPFAM" id="SSF110132">
    <property type="entry name" value="BTV NS2-like ssRNA-binding domain"/>
    <property type="match status" value="1"/>
</dbReference>
<organism>
    <name type="scientific">Epizootic hemorrhagic disease virus 2 (strain Alberta)</name>
    <name type="common">EHDV-2</name>
    <dbReference type="NCBI Taxonomy" id="10910"/>
    <lineage>
        <taxon>Viruses</taxon>
        <taxon>Riboviria</taxon>
        <taxon>Orthornavirae</taxon>
        <taxon>Duplornaviricota</taxon>
        <taxon>Resentoviricetes</taxon>
        <taxon>Reovirales</taxon>
        <taxon>Sedoreoviridae</taxon>
        <taxon>Orbivirus</taxon>
        <taxon>Epizootic hemorrhagic disease virus</taxon>
    </lineage>
</organism>
<gene>
    <name type="primary">Segment-8</name>
</gene>
<reference key="1">
    <citation type="journal article" date="1991" name="Virology">
        <title>A comparison of the nucleotide sequences of cognate NS2 genes of three different orbiviruses.</title>
        <authorList>
            <person name="van Staden V."/>
            <person name="Theron J."/>
            <person name="Greyling B.J."/>
            <person name="Huismans H."/>
            <person name="Nel L.H."/>
        </authorList>
    </citation>
    <scope>NUCLEOTIDE SEQUENCE [GENOMIC RNA]</scope>
</reference>
<proteinExistence type="inferred from homology"/>
<protein>
    <recommendedName>
        <fullName>Non-structural protein NS2</fullName>
    </recommendedName>
</protein>
<name>VNS2_EHDV2</name>